<accession>Q6P1N9</accession>
<accession>B2R5J0</accession>
<accession>Q8TD02</accession>
<accession>Q9BY40</accession>
<gene>
    <name type="primary">TATDN1</name>
    <name type="ORF">CDA11</name>
</gene>
<keyword id="KW-0002">3D-structure</keyword>
<keyword id="KW-0025">Alternative splicing</keyword>
<keyword id="KW-0378">Hydrolase</keyword>
<keyword id="KW-0479">Metal-binding</keyword>
<keyword id="KW-0540">Nuclease</keyword>
<keyword id="KW-0539">Nucleus</keyword>
<keyword id="KW-1267">Proteomics identification</keyword>
<keyword id="KW-1185">Reference proteome</keyword>
<evidence type="ECO:0000250" key="1">
    <source>
        <dbReference type="UniProtKB" id="Q17R31"/>
    </source>
</evidence>
<evidence type="ECO:0000250" key="2">
    <source>
        <dbReference type="UniProtKB" id="Q6GML7"/>
    </source>
</evidence>
<evidence type="ECO:0000250" key="3">
    <source>
        <dbReference type="UniProtKB" id="Q6P8M1"/>
    </source>
</evidence>
<evidence type="ECO:0000303" key="4">
    <source ref="2"/>
</evidence>
<evidence type="ECO:0000305" key="5"/>
<evidence type="ECO:0007829" key="6">
    <source>
        <dbReference type="PDB" id="2XIO"/>
    </source>
</evidence>
<protein>
    <recommendedName>
        <fullName>Deoxyribonuclease TATDN1</fullName>
        <ecNumber>3.1.21.-</ecNumber>
    </recommendedName>
    <alternativeName>
        <fullName>Hepatocarcinoma high expression protein</fullName>
    </alternativeName>
</protein>
<name>TATD1_HUMAN</name>
<sequence>MSRFKFIDIGINLTDPMFRGIYRGVQKHQDDLQDVIGRAVEIGVKKFMITGGNLQDSKDALHLAQTNGMFFSTVGCHPTRCGEFEKNNPDLYLKELLNLAENNKGKVVAIGECGLDFDRLQFCPKDTQLKYFEKQFELSEQTKLPMFLHCRNSHAEFLDIMKRNRDRCVGGVVHSFDGTKEAAAALIDLDLYIGFNGCSLKTEANLEVLKSIPSEKLMIETDAPWCGVKSTHAGSKYIRTAFPTKKKWESGHCLKDRNEPCHIIQILEIMSAVRDEDPLELANTLYNNTIKVFFPGI</sequence>
<reference key="1">
    <citation type="submission" date="1999-12" db="EMBL/GenBank/DDBJ databases">
        <title>A novel gene expressed in human pheochromocytoma.</title>
        <authorList>
            <person name="Li Y."/>
            <person name="Huang Q."/>
            <person name="Peng Y."/>
            <person name="Song H."/>
            <person name="Yu Y."/>
            <person name="Xu S."/>
            <person name="Ren S."/>
            <person name="Chen Z."/>
            <person name="Han Z."/>
        </authorList>
    </citation>
    <scope>NUCLEOTIDE SEQUENCE [LARGE SCALE MRNA] (ISOFORM 1)</scope>
    <source>
        <tissue>Pheochromocytoma</tissue>
    </source>
</reference>
<reference key="2">
    <citation type="submission" date="2001-12" db="EMBL/GenBank/DDBJ databases">
        <authorList>
            <person name="Xu Y."/>
            <person name="Wu C."/>
            <person name="He G."/>
            <person name="Huang Y."/>
            <person name="Cao Y."/>
            <person name="Ying K."/>
            <person name="Xie Y."/>
            <person name="Mao Y."/>
        </authorList>
    </citation>
    <scope>NUCLEOTIDE SEQUENCE [LARGE SCALE MRNA] (ISOFORM 2)</scope>
</reference>
<reference key="3">
    <citation type="journal article" date="2004" name="Nat. Genet.">
        <title>Complete sequencing and characterization of 21,243 full-length human cDNAs.</title>
        <authorList>
            <person name="Ota T."/>
            <person name="Suzuki Y."/>
            <person name="Nishikawa T."/>
            <person name="Otsuki T."/>
            <person name="Sugiyama T."/>
            <person name="Irie R."/>
            <person name="Wakamatsu A."/>
            <person name="Hayashi K."/>
            <person name="Sato H."/>
            <person name="Nagai K."/>
            <person name="Kimura K."/>
            <person name="Makita H."/>
            <person name="Sekine M."/>
            <person name="Obayashi M."/>
            <person name="Nishi T."/>
            <person name="Shibahara T."/>
            <person name="Tanaka T."/>
            <person name="Ishii S."/>
            <person name="Yamamoto J."/>
            <person name="Saito K."/>
            <person name="Kawai Y."/>
            <person name="Isono Y."/>
            <person name="Nakamura Y."/>
            <person name="Nagahari K."/>
            <person name="Murakami K."/>
            <person name="Yasuda T."/>
            <person name="Iwayanagi T."/>
            <person name="Wagatsuma M."/>
            <person name="Shiratori A."/>
            <person name="Sudo H."/>
            <person name="Hosoiri T."/>
            <person name="Kaku Y."/>
            <person name="Kodaira H."/>
            <person name="Kondo H."/>
            <person name="Sugawara M."/>
            <person name="Takahashi M."/>
            <person name="Kanda K."/>
            <person name="Yokoi T."/>
            <person name="Furuya T."/>
            <person name="Kikkawa E."/>
            <person name="Omura Y."/>
            <person name="Abe K."/>
            <person name="Kamihara K."/>
            <person name="Katsuta N."/>
            <person name="Sato K."/>
            <person name="Tanikawa M."/>
            <person name="Yamazaki M."/>
            <person name="Ninomiya K."/>
            <person name="Ishibashi T."/>
            <person name="Yamashita H."/>
            <person name="Murakawa K."/>
            <person name="Fujimori K."/>
            <person name="Tanai H."/>
            <person name="Kimata M."/>
            <person name="Watanabe M."/>
            <person name="Hiraoka S."/>
            <person name="Chiba Y."/>
            <person name="Ishida S."/>
            <person name="Ono Y."/>
            <person name="Takiguchi S."/>
            <person name="Watanabe S."/>
            <person name="Yosida M."/>
            <person name="Hotuta T."/>
            <person name="Kusano J."/>
            <person name="Kanehori K."/>
            <person name="Takahashi-Fujii A."/>
            <person name="Hara H."/>
            <person name="Tanase T.-O."/>
            <person name="Nomura Y."/>
            <person name="Togiya S."/>
            <person name="Komai F."/>
            <person name="Hara R."/>
            <person name="Takeuchi K."/>
            <person name="Arita M."/>
            <person name="Imose N."/>
            <person name="Musashino K."/>
            <person name="Yuuki H."/>
            <person name="Oshima A."/>
            <person name="Sasaki N."/>
            <person name="Aotsuka S."/>
            <person name="Yoshikawa Y."/>
            <person name="Matsunawa H."/>
            <person name="Ichihara T."/>
            <person name="Shiohata N."/>
            <person name="Sano S."/>
            <person name="Moriya S."/>
            <person name="Momiyama H."/>
            <person name="Satoh N."/>
            <person name="Takami S."/>
            <person name="Terashima Y."/>
            <person name="Suzuki O."/>
            <person name="Nakagawa S."/>
            <person name="Senoh A."/>
            <person name="Mizoguchi H."/>
            <person name="Goto Y."/>
            <person name="Shimizu F."/>
            <person name="Wakebe H."/>
            <person name="Hishigaki H."/>
            <person name="Watanabe T."/>
            <person name="Sugiyama A."/>
            <person name="Takemoto M."/>
            <person name="Kawakami B."/>
            <person name="Yamazaki M."/>
            <person name="Watanabe K."/>
            <person name="Kumagai A."/>
            <person name="Itakura S."/>
            <person name="Fukuzumi Y."/>
            <person name="Fujimori Y."/>
            <person name="Komiyama M."/>
            <person name="Tashiro H."/>
            <person name="Tanigami A."/>
            <person name="Fujiwara T."/>
            <person name="Ono T."/>
            <person name="Yamada K."/>
            <person name="Fujii Y."/>
            <person name="Ozaki K."/>
            <person name="Hirao M."/>
            <person name="Ohmori Y."/>
            <person name="Kawabata A."/>
            <person name="Hikiji T."/>
            <person name="Kobatake N."/>
            <person name="Inagaki H."/>
            <person name="Ikema Y."/>
            <person name="Okamoto S."/>
            <person name="Okitani R."/>
            <person name="Kawakami T."/>
            <person name="Noguchi S."/>
            <person name="Itoh T."/>
            <person name="Shigeta K."/>
            <person name="Senba T."/>
            <person name="Matsumura K."/>
            <person name="Nakajima Y."/>
            <person name="Mizuno T."/>
            <person name="Morinaga M."/>
            <person name="Sasaki M."/>
            <person name="Togashi T."/>
            <person name="Oyama M."/>
            <person name="Hata H."/>
            <person name="Watanabe M."/>
            <person name="Komatsu T."/>
            <person name="Mizushima-Sugano J."/>
            <person name="Satoh T."/>
            <person name="Shirai Y."/>
            <person name="Takahashi Y."/>
            <person name="Nakagawa K."/>
            <person name="Okumura K."/>
            <person name="Nagase T."/>
            <person name="Nomura N."/>
            <person name="Kikuchi H."/>
            <person name="Masuho Y."/>
            <person name="Yamashita R."/>
            <person name="Nakai K."/>
            <person name="Yada T."/>
            <person name="Nakamura Y."/>
            <person name="Ohara O."/>
            <person name="Isogai T."/>
            <person name="Sugano S."/>
        </authorList>
    </citation>
    <scope>NUCLEOTIDE SEQUENCE [LARGE SCALE MRNA] (ISOFORM 1)</scope>
    <source>
        <tissue>Skeletal muscle</tissue>
    </source>
</reference>
<reference key="4">
    <citation type="submission" date="2005-07" db="EMBL/GenBank/DDBJ databases">
        <authorList>
            <person name="Mural R.J."/>
            <person name="Istrail S."/>
            <person name="Sutton G.G."/>
            <person name="Florea L."/>
            <person name="Halpern A.L."/>
            <person name="Mobarry C.M."/>
            <person name="Lippert R."/>
            <person name="Walenz B."/>
            <person name="Shatkay H."/>
            <person name="Dew I."/>
            <person name="Miller J.R."/>
            <person name="Flanigan M.J."/>
            <person name="Edwards N.J."/>
            <person name="Bolanos R."/>
            <person name="Fasulo D."/>
            <person name="Halldorsson B.V."/>
            <person name="Hannenhalli S."/>
            <person name="Turner R."/>
            <person name="Yooseph S."/>
            <person name="Lu F."/>
            <person name="Nusskern D.R."/>
            <person name="Shue B.C."/>
            <person name="Zheng X.H."/>
            <person name="Zhong F."/>
            <person name="Delcher A.L."/>
            <person name="Huson D.H."/>
            <person name="Kravitz S.A."/>
            <person name="Mouchard L."/>
            <person name="Reinert K."/>
            <person name="Remington K.A."/>
            <person name="Clark A.G."/>
            <person name="Waterman M.S."/>
            <person name="Eichler E.E."/>
            <person name="Adams M.D."/>
            <person name="Hunkapiller M.W."/>
            <person name="Myers E.W."/>
            <person name="Venter J.C."/>
        </authorList>
    </citation>
    <scope>NUCLEOTIDE SEQUENCE [LARGE SCALE GENOMIC DNA]</scope>
</reference>
<reference key="5">
    <citation type="journal article" date="2004" name="Genome Res.">
        <title>The status, quality, and expansion of the NIH full-length cDNA project: the Mammalian Gene Collection (MGC).</title>
        <authorList>
            <consortium name="The MGC Project Team"/>
        </authorList>
    </citation>
    <scope>NUCLEOTIDE SEQUENCE [LARGE SCALE MRNA] (ISOFORM 1)</scope>
    <source>
        <tissue>Eye</tissue>
    </source>
</reference>
<reference key="6">
    <citation type="journal article" date="2011" name="BMC Syst. Biol.">
        <title>Initial characterization of the human central proteome.</title>
        <authorList>
            <person name="Burkard T.R."/>
            <person name="Planyavsky M."/>
            <person name="Kaupe I."/>
            <person name="Breitwieser F.P."/>
            <person name="Buerckstuemmer T."/>
            <person name="Bennett K.L."/>
            <person name="Superti-Furga G."/>
            <person name="Colinge J."/>
        </authorList>
    </citation>
    <scope>IDENTIFICATION BY MASS SPECTROMETRY [LARGE SCALE ANALYSIS]</scope>
</reference>
<reference key="7">
    <citation type="journal article" date="2014" name="J. Proteomics">
        <title>An enzyme assisted RP-RPLC approach for in-depth analysis of human liver phosphoproteome.</title>
        <authorList>
            <person name="Bian Y."/>
            <person name="Song C."/>
            <person name="Cheng K."/>
            <person name="Dong M."/>
            <person name="Wang F."/>
            <person name="Huang J."/>
            <person name="Sun D."/>
            <person name="Wang L."/>
            <person name="Ye M."/>
            <person name="Zou H."/>
        </authorList>
    </citation>
    <scope>IDENTIFICATION BY MASS SPECTROMETRY [LARGE SCALE ANALYSIS]</scope>
    <source>
        <tissue>Liver</tissue>
    </source>
</reference>
<reference key="8">
    <citation type="submission" date="2010-07" db="PDB data bank">
        <title>Structure of putative deoxyribonuclease TATDN1 isoform A.</title>
        <authorList>
            <consortium name="Structural genomics consortium (SGC)"/>
        </authorList>
    </citation>
    <scope>X-RAY CRYSTALLOGRAPHY (1.2 ANGSTROMS) OF 5-295</scope>
</reference>
<feature type="chain" id="PRO_0000313590" description="Deoxyribonuclease TATDN1">
    <location>
        <begin position="1"/>
        <end position="297"/>
    </location>
</feature>
<feature type="binding site" evidence="1">
    <location>
        <position position="112"/>
    </location>
    <ligand>
        <name>a divalent metal cation</name>
        <dbReference type="ChEBI" id="CHEBI:60240"/>
        <label>1</label>
    </ligand>
</feature>
<feature type="binding site" evidence="1">
    <location>
        <position position="112"/>
    </location>
    <ligand>
        <name>a divalent metal cation</name>
        <dbReference type="ChEBI" id="CHEBI:60240"/>
        <label>2</label>
    </ligand>
</feature>
<feature type="binding site" evidence="1">
    <location>
        <position position="149"/>
    </location>
    <ligand>
        <name>a divalent metal cation</name>
        <dbReference type="ChEBI" id="CHEBI:60240"/>
        <label>2</label>
    </ligand>
</feature>
<feature type="binding site" evidence="1">
    <location>
        <position position="174"/>
    </location>
    <ligand>
        <name>a divalent metal cation</name>
        <dbReference type="ChEBI" id="CHEBI:60240"/>
        <label>2</label>
    </ligand>
</feature>
<feature type="binding site" evidence="1">
    <location>
        <position position="222"/>
    </location>
    <ligand>
        <name>a divalent metal cation</name>
        <dbReference type="ChEBI" id="CHEBI:60240"/>
        <label>1</label>
    </ligand>
</feature>
<feature type="modified residue" description="N6-succinyllysine" evidence="3">
    <location>
        <position position="27"/>
    </location>
</feature>
<feature type="modified residue" description="N6-succinyllysine" evidence="3">
    <location>
        <position position="46"/>
    </location>
</feature>
<feature type="splice variant" id="VSP_030045" description="In isoform 2." evidence="4">
    <location>
        <begin position="1"/>
        <end position="47"/>
    </location>
</feature>
<feature type="sequence conflict" description="In Ref. 5; AAH64964." evidence="5" ref="5">
    <original>M</original>
    <variation>T</variation>
    <location>
        <position position="161"/>
    </location>
</feature>
<feature type="strand" evidence="6">
    <location>
        <begin position="6"/>
        <end position="11"/>
    </location>
</feature>
<feature type="helix" evidence="6">
    <location>
        <begin position="16"/>
        <end position="19"/>
    </location>
</feature>
<feature type="helix" evidence="6">
    <location>
        <begin position="32"/>
        <end position="42"/>
    </location>
</feature>
<feature type="strand" evidence="6">
    <location>
        <begin position="44"/>
        <end position="49"/>
    </location>
</feature>
<feature type="helix" evidence="6">
    <location>
        <begin position="54"/>
        <end position="64"/>
    </location>
</feature>
<feature type="strand" evidence="6">
    <location>
        <begin position="70"/>
        <end position="74"/>
    </location>
</feature>
<feature type="helix" evidence="6">
    <location>
        <begin position="78"/>
        <end position="82"/>
    </location>
</feature>
<feature type="helix" evidence="6">
    <location>
        <begin position="83"/>
        <end position="87"/>
    </location>
</feature>
<feature type="helix" evidence="6">
    <location>
        <begin position="89"/>
        <end position="101"/>
    </location>
</feature>
<feature type="turn" evidence="6">
    <location>
        <begin position="104"/>
        <end position="106"/>
    </location>
</feature>
<feature type="strand" evidence="6">
    <location>
        <begin position="107"/>
        <end position="116"/>
    </location>
</feature>
<feature type="turn" evidence="6">
    <location>
        <begin position="120"/>
        <end position="122"/>
    </location>
</feature>
<feature type="helix" evidence="6">
    <location>
        <begin position="125"/>
        <end position="134"/>
    </location>
</feature>
<feature type="helix" evidence="6">
    <location>
        <begin position="136"/>
        <end position="142"/>
    </location>
</feature>
<feature type="strand" evidence="6">
    <location>
        <begin position="146"/>
        <end position="152"/>
    </location>
</feature>
<feature type="helix" evidence="6">
    <location>
        <begin position="154"/>
        <end position="163"/>
    </location>
</feature>
<feature type="helix" evidence="6">
    <location>
        <begin position="165"/>
        <end position="167"/>
    </location>
</feature>
<feature type="strand" evidence="6">
    <location>
        <begin position="171"/>
        <end position="173"/>
    </location>
</feature>
<feature type="helix" evidence="6">
    <location>
        <begin position="180"/>
        <end position="188"/>
    </location>
</feature>
<feature type="strand" evidence="6">
    <location>
        <begin position="192"/>
        <end position="195"/>
    </location>
</feature>
<feature type="helix" evidence="6">
    <location>
        <begin position="197"/>
        <end position="199"/>
    </location>
</feature>
<feature type="strand" evidence="6">
    <location>
        <begin position="200"/>
        <end position="202"/>
    </location>
</feature>
<feature type="helix" evidence="6">
    <location>
        <begin position="203"/>
        <end position="210"/>
    </location>
</feature>
<feature type="helix" evidence="6">
    <location>
        <begin position="214"/>
        <end position="216"/>
    </location>
</feature>
<feature type="strand" evidence="6">
    <location>
        <begin position="217"/>
        <end position="219"/>
    </location>
</feature>
<feature type="helix" evidence="6">
    <location>
        <begin position="235"/>
        <end position="237"/>
    </location>
</feature>
<feature type="strand" evidence="6">
    <location>
        <begin position="244"/>
        <end position="247"/>
    </location>
</feature>
<feature type="strand" evidence="6">
    <location>
        <begin position="252"/>
        <end position="254"/>
    </location>
</feature>
<feature type="helix" evidence="6">
    <location>
        <begin position="260"/>
        <end position="262"/>
    </location>
</feature>
<feature type="helix" evidence="6">
    <location>
        <begin position="263"/>
        <end position="274"/>
    </location>
</feature>
<feature type="helix" evidence="6">
    <location>
        <begin position="278"/>
        <end position="293"/>
    </location>
</feature>
<proteinExistence type="evidence at protein level"/>
<comment type="function">
    <text evidence="2">Deoxyribonuclease which catalyzes (in vitro) the decatenation of kinetoplast DNA, which are circular DNA catenated to each other, producing linear DNA molecules (By similarity). Plays an important role in chromosomal segregation and cell cycle progression during eye development probably via its DNA decatenation activity (By similarity).</text>
</comment>
<comment type="cofactor">
    <cofactor evidence="1">
        <name>a divalent metal cation</name>
        <dbReference type="ChEBI" id="CHEBI:60240"/>
    </cofactor>
    <text evidence="1">Binds 2 divalent metal cations per subunit.</text>
</comment>
<comment type="subcellular location">
    <subcellularLocation>
        <location evidence="5">Nucleus</location>
    </subcellularLocation>
</comment>
<comment type="alternative products">
    <event type="alternative splicing"/>
    <isoform>
        <id>Q6P1N9-1</id>
        <name>1</name>
        <sequence type="displayed"/>
    </isoform>
    <isoform>
        <id>Q6P1N9-2</id>
        <name>2</name>
        <sequence type="described" ref="VSP_030045"/>
    </isoform>
</comment>
<comment type="similarity">
    <text evidence="5">Belongs to the metallo-dependent hydrolases superfamily. TatD-type hydrolase family.</text>
</comment>
<organism>
    <name type="scientific">Homo sapiens</name>
    <name type="common">Human</name>
    <dbReference type="NCBI Taxonomy" id="9606"/>
    <lineage>
        <taxon>Eukaryota</taxon>
        <taxon>Metazoa</taxon>
        <taxon>Chordata</taxon>
        <taxon>Craniata</taxon>
        <taxon>Vertebrata</taxon>
        <taxon>Euteleostomi</taxon>
        <taxon>Mammalia</taxon>
        <taxon>Eutheria</taxon>
        <taxon>Euarchontoglires</taxon>
        <taxon>Primates</taxon>
        <taxon>Haplorrhini</taxon>
        <taxon>Catarrhini</taxon>
        <taxon>Hominidae</taxon>
        <taxon>Homo</taxon>
    </lineage>
</organism>
<dbReference type="EC" id="3.1.21.-"/>
<dbReference type="EMBL" id="AF212250">
    <property type="protein sequence ID" value="AAK14933.1"/>
    <property type="molecule type" value="mRNA"/>
</dbReference>
<dbReference type="EMBL" id="AY071865">
    <property type="protein sequence ID" value="AAL61823.1"/>
    <property type="molecule type" value="mRNA"/>
</dbReference>
<dbReference type="EMBL" id="AK312204">
    <property type="protein sequence ID" value="BAG35137.1"/>
    <property type="molecule type" value="mRNA"/>
</dbReference>
<dbReference type="EMBL" id="CH471060">
    <property type="protein sequence ID" value="EAW92066.1"/>
    <property type="molecule type" value="Genomic_DNA"/>
</dbReference>
<dbReference type="EMBL" id="CH471060">
    <property type="protein sequence ID" value="EAW92067.1"/>
    <property type="molecule type" value="Genomic_DNA"/>
</dbReference>
<dbReference type="EMBL" id="BC064964">
    <property type="protein sequence ID" value="AAH64964.1"/>
    <property type="molecule type" value="mRNA"/>
</dbReference>
<dbReference type="CCDS" id="CCDS55273.1">
    <molecule id="Q6P1N9-2"/>
</dbReference>
<dbReference type="CCDS" id="CCDS6351.1">
    <molecule id="Q6P1N9-1"/>
</dbReference>
<dbReference type="RefSeq" id="NP_001139632.1">
    <molecule id="Q6P1N9-2"/>
    <property type="nucleotide sequence ID" value="NM_001146160.1"/>
</dbReference>
<dbReference type="RefSeq" id="NP_001304819.1">
    <property type="nucleotide sequence ID" value="NM_001317890.1"/>
</dbReference>
<dbReference type="RefSeq" id="NP_001304820.1">
    <property type="nucleotide sequence ID" value="NM_001317891.1"/>
</dbReference>
<dbReference type="RefSeq" id="NP_114415.1">
    <molecule id="Q6P1N9-1"/>
    <property type="nucleotide sequence ID" value="NM_032026.4"/>
</dbReference>
<dbReference type="RefSeq" id="XP_016869387.1">
    <property type="nucleotide sequence ID" value="XM_017013898.1"/>
</dbReference>
<dbReference type="RefSeq" id="XP_047278258.1">
    <molecule id="Q6P1N9-2"/>
    <property type="nucleotide sequence ID" value="XM_047422302.1"/>
</dbReference>
<dbReference type="RefSeq" id="XP_054189028.1">
    <molecule id="Q6P1N9-2"/>
    <property type="nucleotide sequence ID" value="XM_054333053.1"/>
</dbReference>
<dbReference type="RefSeq" id="XP_054217325.1">
    <molecule id="Q6P1N9-2"/>
    <property type="nucleotide sequence ID" value="XM_054361350.1"/>
</dbReference>
<dbReference type="PDB" id="2XIO">
    <property type="method" value="X-ray"/>
    <property type="resolution" value="1.19 A"/>
    <property type="chains" value="A=5-295"/>
</dbReference>
<dbReference type="PDB" id="8EFG">
    <property type="method" value="X-ray"/>
    <property type="resolution" value="1.50 A"/>
    <property type="chains" value="A=2-296"/>
</dbReference>
<dbReference type="PDBsum" id="2XIO"/>
<dbReference type="PDBsum" id="8EFG"/>
<dbReference type="SMR" id="Q6P1N9"/>
<dbReference type="BioGRID" id="123823">
    <property type="interactions" value="89"/>
</dbReference>
<dbReference type="FunCoup" id="Q6P1N9">
    <property type="interactions" value="1599"/>
</dbReference>
<dbReference type="IntAct" id="Q6P1N9">
    <property type="interactions" value="14"/>
</dbReference>
<dbReference type="STRING" id="9606.ENSP00000276692"/>
<dbReference type="GlyGen" id="Q6P1N9">
    <property type="glycosylation" value="1 site, 1 O-linked glycan (1 site)"/>
</dbReference>
<dbReference type="iPTMnet" id="Q6P1N9"/>
<dbReference type="PhosphoSitePlus" id="Q6P1N9"/>
<dbReference type="SwissPalm" id="Q6P1N9"/>
<dbReference type="BioMuta" id="TATDN1"/>
<dbReference type="DMDM" id="166227295"/>
<dbReference type="jPOST" id="Q6P1N9"/>
<dbReference type="MassIVE" id="Q6P1N9"/>
<dbReference type="PaxDb" id="9606-ENSP00000276692"/>
<dbReference type="PeptideAtlas" id="Q6P1N9"/>
<dbReference type="ProteomicsDB" id="66858">
    <molecule id="Q6P1N9-1"/>
</dbReference>
<dbReference type="ProteomicsDB" id="66859">
    <molecule id="Q6P1N9-2"/>
</dbReference>
<dbReference type="Pumba" id="Q6P1N9"/>
<dbReference type="Antibodypedia" id="13907">
    <property type="antibodies" value="94 antibodies from 19 providers"/>
</dbReference>
<dbReference type="DNASU" id="83940"/>
<dbReference type="Ensembl" id="ENST00000276692.11">
    <molecule id="Q6P1N9-1"/>
    <property type="protein sequence ID" value="ENSP00000276692.6"/>
    <property type="gene ID" value="ENSG00000147687.19"/>
</dbReference>
<dbReference type="Ensembl" id="ENST00000519548.5">
    <molecule id="Q6P1N9-2"/>
    <property type="protein sequence ID" value="ENSP00000428336.1"/>
    <property type="gene ID" value="ENSG00000147687.19"/>
</dbReference>
<dbReference type="Ensembl" id="ENST00000708478.1">
    <molecule id="Q6P1N9-1"/>
    <property type="protein sequence ID" value="ENSP00000517241.1"/>
    <property type="gene ID" value="ENSG00000291730.1"/>
</dbReference>
<dbReference type="Ensembl" id="ENST00000708482.1">
    <molecule id="Q6P1N9-2"/>
    <property type="protein sequence ID" value="ENSP00000517244.1"/>
    <property type="gene ID" value="ENSG00000291730.1"/>
</dbReference>
<dbReference type="GeneID" id="83940"/>
<dbReference type="KEGG" id="hsa:83940"/>
<dbReference type="MANE-Select" id="ENST00000276692.11">
    <property type="protein sequence ID" value="ENSP00000276692.6"/>
    <property type="RefSeq nucleotide sequence ID" value="NM_032026.4"/>
    <property type="RefSeq protein sequence ID" value="NP_114415.1"/>
</dbReference>
<dbReference type="UCSC" id="uc003yrd.4">
    <molecule id="Q6P1N9-1"/>
    <property type="organism name" value="human"/>
</dbReference>
<dbReference type="AGR" id="HGNC:24220"/>
<dbReference type="CTD" id="83940"/>
<dbReference type="DisGeNET" id="83940"/>
<dbReference type="GeneCards" id="TATDN1"/>
<dbReference type="HGNC" id="HGNC:24220">
    <property type="gene designation" value="TATDN1"/>
</dbReference>
<dbReference type="HPA" id="ENSG00000147687">
    <property type="expression patterns" value="Low tissue specificity"/>
</dbReference>
<dbReference type="MIM" id="619364">
    <property type="type" value="gene"/>
</dbReference>
<dbReference type="neXtProt" id="NX_Q6P1N9"/>
<dbReference type="OpenTargets" id="ENSG00000147687"/>
<dbReference type="PharmGKB" id="PA134971804"/>
<dbReference type="VEuPathDB" id="HostDB:ENSG00000147687"/>
<dbReference type="eggNOG" id="KOG3020">
    <property type="taxonomic scope" value="Eukaryota"/>
</dbReference>
<dbReference type="GeneTree" id="ENSGT00940000156272"/>
<dbReference type="InParanoid" id="Q6P1N9"/>
<dbReference type="OMA" id="YGGSQKH"/>
<dbReference type="OrthoDB" id="6079689at2759"/>
<dbReference type="PAN-GO" id="Q6P1N9">
    <property type="GO annotations" value="1 GO annotation based on evolutionary models"/>
</dbReference>
<dbReference type="PhylomeDB" id="Q6P1N9"/>
<dbReference type="TreeFam" id="TF324192"/>
<dbReference type="PathwayCommons" id="Q6P1N9"/>
<dbReference type="SignaLink" id="Q6P1N9"/>
<dbReference type="BioGRID-ORCS" id="83940">
    <property type="hits" value="15 hits in 1110 CRISPR screens"/>
</dbReference>
<dbReference type="ChiTaRS" id="TATDN1">
    <property type="organism name" value="human"/>
</dbReference>
<dbReference type="EvolutionaryTrace" id="Q6P1N9"/>
<dbReference type="GenomeRNAi" id="83940"/>
<dbReference type="Pharos" id="Q6P1N9">
    <property type="development level" value="Tbio"/>
</dbReference>
<dbReference type="PRO" id="PR:Q6P1N9"/>
<dbReference type="Proteomes" id="UP000005640">
    <property type="component" value="Chromosome 8"/>
</dbReference>
<dbReference type="RNAct" id="Q6P1N9">
    <property type="molecule type" value="protein"/>
</dbReference>
<dbReference type="Bgee" id="ENSG00000147687">
    <property type="expression patterns" value="Expressed in body of pancreas and 106 other cell types or tissues"/>
</dbReference>
<dbReference type="ExpressionAtlas" id="Q6P1N9">
    <property type="expression patterns" value="baseline and differential"/>
</dbReference>
<dbReference type="GO" id="GO:0005739">
    <property type="term" value="C:mitochondrion"/>
    <property type="evidence" value="ECO:0006056"/>
    <property type="project" value="FlyBase"/>
</dbReference>
<dbReference type="GO" id="GO:0005654">
    <property type="term" value="C:nucleoplasm"/>
    <property type="evidence" value="ECO:0000314"/>
    <property type="project" value="HPA"/>
</dbReference>
<dbReference type="GO" id="GO:0008296">
    <property type="term" value="F:3'-5'-DNA exonuclease activity"/>
    <property type="evidence" value="ECO:0000318"/>
    <property type="project" value="GO_Central"/>
</dbReference>
<dbReference type="GO" id="GO:0046872">
    <property type="term" value="F:metal ion binding"/>
    <property type="evidence" value="ECO:0007669"/>
    <property type="project" value="UniProtKB-KW"/>
</dbReference>
<dbReference type="CDD" id="cd01310">
    <property type="entry name" value="TatD_DNAse"/>
    <property type="match status" value="1"/>
</dbReference>
<dbReference type="FunFam" id="3.20.20.140:FF:000034">
    <property type="entry name" value="putative deoxyribonuclease TATDN1 isoform X1"/>
    <property type="match status" value="1"/>
</dbReference>
<dbReference type="Gene3D" id="3.20.20.140">
    <property type="entry name" value="Metal-dependent hydrolases"/>
    <property type="match status" value="1"/>
</dbReference>
<dbReference type="InterPro" id="IPR018228">
    <property type="entry name" value="DNase_TatD-rel_CS"/>
</dbReference>
<dbReference type="InterPro" id="IPR032466">
    <property type="entry name" value="Metal_Hydrolase"/>
</dbReference>
<dbReference type="InterPro" id="IPR001130">
    <property type="entry name" value="TatD-like"/>
</dbReference>
<dbReference type="InterPro" id="IPR050891">
    <property type="entry name" value="TatD-type_Hydrolase"/>
</dbReference>
<dbReference type="PANTHER" id="PTHR10060:SF15">
    <property type="entry name" value="DEOXYRIBONUCLEASE TATDN1"/>
    <property type="match status" value="1"/>
</dbReference>
<dbReference type="PANTHER" id="PTHR10060">
    <property type="entry name" value="TATD FAMILY DEOXYRIBONUCLEASE"/>
    <property type="match status" value="1"/>
</dbReference>
<dbReference type="Pfam" id="PF01026">
    <property type="entry name" value="TatD_DNase"/>
    <property type="match status" value="1"/>
</dbReference>
<dbReference type="PIRSF" id="PIRSF005902">
    <property type="entry name" value="DNase_TatD"/>
    <property type="match status" value="1"/>
</dbReference>
<dbReference type="SUPFAM" id="SSF51556">
    <property type="entry name" value="Metallo-dependent hydrolases"/>
    <property type="match status" value="1"/>
</dbReference>
<dbReference type="PROSITE" id="PS01091">
    <property type="entry name" value="TATD_3"/>
    <property type="match status" value="1"/>
</dbReference>